<name>RR14_SACHY</name>
<keyword id="KW-0150">Chloroplast</keyword>
<keyword id="KW-0934">Plastid</keyword>
<keyword id="KW-0687">Ribonucleoprotein</keyword>
<keyword id="KW-0689">Ribosomal protein</keyword>
<keyword id="KW-0691">RNA editing</keyword>
<keyword id="KW-0694">RNA-binding</keyword>
<keyword id="KW-0699">rRNA-binding</keyword>
<protein>
    <recommendedName>
        <fullName evidence="1">Small ribosomal subunit protein uS14c</fullName>
    </recommendedName>
    <alternativeName>
        <fullName evidence="4">30S ribosomal protein S14, chloroplastic</fullName>
    </alternativeName>
</protein>
<evidence type="ECO:0000255" key="1">
    <source>
        <dbReference type="HAMAP-Rule" id="MF_00537"/>
    </source>
</evidence>
<evidence type="ECO:0000256" key="2">
    <source>
        <dbReference type="SAM" id="MobiDB-lite"/>
    </source>
</evidence>
<evidence type="ECO:0000269" key="3">
    <source>
    </source>
</evidence>
<evidence type="ECO:0000305" key="4"/>
<gene>
    <name evidence="1" type="primary">rps14</name>
    <name type="ordered locus">PS115</name>
</gene>
<reference key="1">
    <citation type="journal article" date="2004" name="Curr. Genet.">
        <title>Structural features and transcript-editing analysis of sugarcane (Saccharum officinarum L.) chloroplast genome.</title>
        <authorList>
            <person name="Calsa T. Jr."/>
            <person name="Carraro D.M."/>
            <person name="Benatti M.R."/>
            <person name="Barbosa A.C."/>
            <person name="Kitajima J.P."/>
            <person name="Carrer H."/>
        </authorList>
    </citation>
    <scope>NUCLEOTIDE SEQUENCE [LARGE SCALE GENOMIC DNA]</scope>
    <scope>RNA EDITING</scope>
    <source>
        <strain>cv. SP-80-3280</strain>
    </source>
</reference>
<proteinExistence type="evidence at transcript level"/>
<comment type="function">
    <text evidence="1">Binds 16S rRNA, required for the assembly of 30S particles.</text>
</comment>
<comment type="subunit">
    <text evidence="1">Part of the 30S ribosomal subunit.</text>
</comment>
<comment type="subcellular location">
    <subcellularLocation>
        <location>Plastid</location>
        <location>Chloroplast</location>
    </subcellularLocation>
</comment>
<comment type="RNA editing">
    <location>
        <position position="27" evidence="3"/>
    </location>
</comment>
<comment type="similarity">
    <text evidence="1">Belongs to the universal ribosomal protein uS14 family.</text>
</comment>
<sequence>MAKKSLIQREKKRHKLEQKYHLIRRSLKKKIRSKVSPLSLSEKTKMQEKLQSLPRNSAPTRLHRRCFLTGRPRANYRDFGLSGHILREMVYACLLPGATRSSW</sequence>
<accession>Q6L3A0</accession>
<feature type="chain" id="PRO_0000226938" description="Small ribosomal subunit protein uS14c">
    <location>
        <begin position="1"/>
        <end position="103"/>
    </location>
</feature>
<feature type="region of interest" description="Disordered" evidence="2">
    <location>
        <begin position="34"/>
        <end position="56"/>
    </location>
</feature>
<dbReference type="EMBL" id="AE009947">
    <property type="protein sequence ID" value="AAT44692.1"/>
    <property type="status" value="ALT_SEQ"/>
    <property type="molecule type" value="Genomic_DNA"/>
</dbReference>
<dbReference type="SMR" id="Q6L3A0"/>
<dbReference type="GO" id="GO:0009507">
    <property type="term" value="C:chloroplast"/>
    <property type="evidence" value="ECO:0007669"/>
    <property type="project" value="UniProtKB-SubCell"/>
</dbReference>
<dbReference type="GO" id="GO:0015935">
    <property type="term" value="C:small ribosomal subunit"/>
    <property type="evidence" value="ECO:0007669"/>
    <property type="project" value="TreeGrafter"/>
</dbReference>
<dbReference type="GO" id="GO:0019843">
    <property type="term" value="F:rRNA binding"/>
    <property type="evidence" value="ECO:0007669"/>
    <property type="project" value="UniProtKB-UniRule"/>
</dbReference>
<dbReference type="GO" id="GO:0003735">
    <property type="term" value="F:structural constituent of ribosome"/>
    <property type="evidence" value="ECO:0007669"/>
    <property type="project" value="InterPro"/>
</dbReference>
<dbReference type="GO" id="GO:0006412">
    <property type="term" value="P:translation"/>
    <property type="evidence" value="ECO:0007669"/>
    <property type="project" value="UniProtKB-UniRule"/>
</dbReference>
<dbReference type="FunFam" id="1.10.287.1480:FF:000001">
    <property type="entry name" value="30S ribosomal protein S14"/>
    <property type="match status" value="1"/>
</dbReference>
<dbReference type="Gene3D" id="1.10.287.1480">
    <property type="match status" value="1"/>
</dbReference>
<dbReference type="HAMAP" id="MF_00537">
    <property type="entry name" value="Ribosomal_uS14_1"/>
    <property type="match status" value="1"/>
</dbReference>
<dbReference type="InterPro" id="IPR001209">
    <property type="entry name" value="Ribosomal_uS14"/>
</dbReference>
<dbReference type="InterPro" id="IPR023036">
    <property type="entry name" value="Ribosomal_uS14_bac/plastid"/>
</dbReference>
<dbReference type="InterPro" id="IPR018271">
    <property type="entry name" value="Ribosomal_uS14_CS"/>
</dbReference>
<dbReference type="NCBIfam" id="NF006477">
    <property type="entry name" value="PRK08881.1"/>
    <property type="match status" value="1"/>
</dbReference>
<dbReference type="PANTHER" id="PTHR19836">
    <property type="entry name" value="30S RIBOSOMAL PROTEIN S14"/>
    <property type="match status" value="1"/>
</dbReference>
<dbReference type="PANTHER" id="PTHR19836:SF19">
    <property type="entry name" value="SMALL RIBOSOMAL SUBUNIT PROTEIN US14M"/>
    <property type="match status" value="1"/>
</dbReference>
<dbReference type="Pfam" id="PF00253">
    <property type="entry name" value="Ribosomal_S14"/>
    <property type="match status" value="1"/>
</dbReference>
<dbReference type="SUPFAM" id="SSF57716">
    <property type="entry name" value="Glucocorticoid receptor-like (DNA-binding domain)"/>
    <property type="match status" value="1"/>
</dbReference>
<dbReference type="PROSITE" id="PS00527">
    <property type="entry name" value="RIBOSOMAL_S14"/>
    <property type="match status" value="1"/>
</dbReference>
<geneLocation type="chloroplast"/>
<organism>
    <name type="scientific">Saccharum hybrid</name>
    <name type="common">Sugarcane</name>
    <dbReference type="NCBI Taxonomy" id="15819"/>
    <lineage>
        <taxon>Eukaryota</taxon>
        <taxon>Viridiplantae</taxon>
        <taxon>Streptophyta</taxon>
        <taxon>Embryophyta</taxon>
        <taxon>Tracheophyta</taxon>
        <taxon>Spermatophyta</taxon>
        <taxon>Magnoliopsida</taxon>
        <taxon>Liliopsida</taxon>
        <taxon>Poales</taxon>
        <taxon>Poaceae</taxon>
        <taxon>PACMAD clade</taxon>
        <taxon>Panicoideae</taxon>
        <taxon>Andropogonodae</taxon>
        <taxon>Andropogoneae</taxon>
        <taxon>Saccharinae</taxon>
        <taxon>Saccharum</taxon>
    </lineage>
</organism>